<comment type="function">
    <text evidence="1">During stationary phase, converts 70S ribosomes to an inactive dimeric form (100S ribosomes).</text>
</comment>
<comment type="subcellular location">
    <subcellularLocation>
        <location evidence="1">Cytoplasm</location>
    </subcellularLocation>
</comment>
<comment type="similarity">
    <text evidence="1">Belongs to the ribosome modulation factor family.</text>
</comment>
<proteinExistence type="inferred from homology"/>
<protein>
    <recommendedName>
        <fullName evidence="1">Ribosome modulation factor</fullName>
        <shortName evidence="1">RMF</shortName>
    </recommendedName>
</protein>
<evidence type="ECO:0000255" key="1">
    <source>
        <dbReference type="HAMAP-Rule" id="MF_00919"/>
    </source>
</evidence>
<reference key="1">
    <citation type="submission" date="2007-09" db="EMBL/GenBank/DDBJ databases">
        <title>Complete sequence of chromosome of Serratia proteamaculans 568.</title>
        <authorList>
            <consortium name="US DOE Joint Genome Institute"/>
            <person name="Copeland A."/>
            <person name="Lucas S."/>
            <person name="Lapidus A."/>
            <person name="Barry K."/>
            <person name="Glavina del Rio T."/>
            <person name="Dalin E."/>
            <person name="Tice H."/>
            <person name="Pitluck S."/>
            <person name="Chain P."/>
            <person name="Malfatti S."/>
            <person name="Shin M."/>
            <person name="Vergez L."/>
            <person name="Schmutz J."/>
            <person name="Larimer F."/>
            <person name="Land M."/>
            <person name="Hauser L."/>
            <person name="Kyrpides N."/>
            <person name="Kim E."/>
            <person name="Taghavi S."/>
            <person name="Newman L."/>
            <person name="Vangronsveld J."/>
            <person name="van der Lelie D."/>
            <person name="Richardson P."/>
        </authorList>
    </citation>
    <scope>NUCLEOTIDE SEQUENCE [LARGE SCALE GENOMIC DNA]</scope>
    <source>
        <strain>568</strain>
    </source>
</reference>
<accession>A8GCL2</accession>
<name>RMF_SERP5</name>
<sequence>MKRQKRDRLERAHSKGYQAGILGHPKDYCPYKTTVESRSQWLGGWREAMEDRAVTA</sequence>
<gene>
    <name evidence="1" type="primary">rmf</name>
    <name type="ordered locus">Spro_1748</name>
</gene>
<dbReference type="EMBL" id="CP000826">
    <property type="protein sequence ID" value="ABV40852.1"/>
    <property type="molecule type" value="Genomic_DNA"/>
</dbReference>
<dbReference type="SMR" id="A8GCL2"/>
<dbReference type="STRING" id="399741.Spro_1748"/>
<dbReference type="KEGG" id="spe:Spro_1748"/>
<dbReference type="eggNOG" id="COG3130">
    <property type="taxonomic scope" value="Bacteria"/>
</dbReference>
<dbReference type="HOGENOM" id="CLU_203350_0_0_6"/>
<dbReference type="OrthoDB" id="5917763at2"/>
<dbReference type="GO" id="GO:0005737">
    <property type="term" value="C:cytoplasm"/>
    <property type="evidence" value="ECO:0007669"/>
    <property type="project" value="UniProtKB-SubCell"/>
</dbReference>
<dbReference type="GO" id="GO:0006417">
    <property type="term" value="P:regulation of translation"/>
    <property type="evidence" value="ECO:0007669"/>
    <property type="project" value="UniProtKB-UniRule"/>
</dbReference>
<dbReference type="Gene3D" id="1.10.10.620">
    <property type="entry name" value="ribosome modulation factor like domain"/>
    <property type="match status" value="1"/>
</dbReference>
<dbReference type="HAMAP" id="MF_00919">
    <property type="entry name" value="RMF"/>
    <property type="match status" value="1"/>
</dbReference>
<dbReference type="InterPro" id="IPR007040">
    <property type="entry name" value="Ribosome_modulation_factor"/>
</dbReference>
<dbReference type="InterPro" id="IPR023200">
    <property type="entry name" value="RMF_sf"/>
</dbReference>
<dbReference type="NCBIfam" id="NF011162">
    <property type="entry name" value="PRK14563.1"/>
    <property type="match status" value="1"/>
</dbReference>
<dbReference type="NCBIfam" id="NF041886">
    <property type="entry name" value="Rmf_CrpP_fam"/>
    <property type="match status" value="1"/>
</dbReference>
<dbReference type="Pfam" id="PF04957">
    <property type="entry name" value="RMF"/>
    <property type="match status" value="1"/>
</dbReference>
<keyword id="KW-0963">Cytoplasm</keyword>
<keyword id="KW-0810">Translation regulation</keyword>
<feature type="chain" id="PRO_0000416481" description="Ribosome modulation factor">
    <location>
        <begin position="1"/>
        <end position="56"/>
    </location>
</feature>
<organism>
    <name type="scientific">Serratia proteamaculans (strain 568)</name>
    <dbReference type="NCBI Taxonomy" id="399741"/>
    <lineage>
        <taxon>Bacteria</taxon>
        <taxon>Pseudomonadati</taxon>
        <taxon>Pseudomonadota</taxon>
        <taxon>Gammaproteobacteria</taxon>
        <taxon>Enterobacterales</taxon>
        <taxon>Yersiniaceae</taxon>
        <taxon>Serratia</taxon>
    </lineage>
</organism>